<dbReference type="EC" id="3.1.-.-" evidence="1"/>
<dbReference type="EMBL" id="CP001147">
    <property type="protein sequence ID" value="ACI20555.1"/>
    <property type="molecule type" value="Genomic_DNA"/>
</dbReference>
<dbReference type="RefSeq" id="WP_012545291.1">
    <property type="nucleotide sequence ID" value="NC_011296.1"/>
</dbReference>
<dbReference type="RefSeq" id="YP_002249823.1">
    <property type="nucleotide sequence ID" value="NC_011296.1"/>
</dbReference>
<dbReference type="SMR" id="B5YIU9"/>
<dbReference type="STRING" id="289376.THEYE_A2036"/>
<dbReference type="EnsemblBacteria" id="ACI20555">
    <property type="protein sequence ID" value="ACI20555"/>
    <property type="gene ID" value="THEYE_A2036"/>
</dbReference>
<dbReference type="KEGG" id="tye:THEYE_A2036"/>
<dbReference type="PATRIC" id="fig|289376.4.peg.1984"/>
<dbReference type="eggNOG" id="COG1518">
    <property type="taxonomic scope" value="Bacteria"/>
</dbReference>
<dbReference type="HOGENOM" id="CLU_052779_2_0_0"/>
<dbReference type="InParanoid" id="B5YIU9"/>
<dbReference type="OrthoDB" id="9803119at2"/>
<dbReference type="Proteomes" id="UP000000718">
    <property type="component" value="Chromosome"/>
</dbReference>
<dbReference type="GO" id="GO:0003677">
    <property type="term" value="F:DNA binding"/>
    <property type="evidence" value="ECO:0007669"/>
    <property type="project" value="UniProtKB-KW"/>
</dbReference>
<dbReference type="GO" id="GO:0004520">
    <property type="term" value="F:DNA endonuclease activity"/>
    <property type="evidence" value="ECO:0007669"/>
    <property type="project" value="InterPro"/>
</dbReference>
<dbReference type="GO" id="GO:0046872">
    <property type="term" value="F:metal ion binding"/>
    <property type="evidence" value="ECO:0007669"/>
    <property type="project" value="UniProtKB-UniRule"/>
</dbReference>
<dbReference type="GO" id="GO:0051607">
    <property type="term" value="P:defense response to virus"/>
    <property type="evidence" value="ECO:0007669"/>
    <property type="project" value="UniProtKB-UniRule"/>
</dbReference>
<dbReference type="GO" id="GO:0043571">
    <property type="term" value="P:maintenance of CRISPR repeat elements"/>
    <property type="evidence" value="ECO:0007669"/>
    <property type="project" value="UniProtKB-UniRule"/>
</dbReference>
<dbReference type="CDD" id="cd09722">
    <property type="entry name" value="Cas1_I-B"/>
    <property type="match status" value="1"/>
</dbReference>
<dbReference type="Gene3D" id="1.20.120.920">
    <property type="entry name" value="CRISPR-associated endonuclease Cas1, C-terminal domain"/>
    <property type="match status" value="1"/>
</dbReference>
<dbReference type="Gene3D" id="3.100.10.20">
    <property type="entry name" value="CRISPR-associated endonuclease Cas1, N-terminal domain"/>
    <property type="match status" value="1"/>
</dbReference>
<dbReference type="HAMAP" id="MF_01470">
    <property type="entry name" value="Cas1"/>
    <property type="match status" value="1"/>
</dbReference>
<dbReference type="InterPro" id="IPR002729">
    <property type="entry name" value="CRISPR-assoc_Cas1"/>
</dbReference>
<dbReference type="InterPro" id="IPR042206">
    <property type="entry name" value="CRISPR-assoc_Cas1_C"/>
</dbReference>
<dbReference type="InterPro" id="IPR019858">
    <property type="entry name" value="CRISPR-assoc_Cas1_HMARI/TNEAP"/>
</dbReference>
<dbReference type="InterPro" id="IPR042211">
    <property type="entry name" value="CRISPR-assoc_Cas1_N"/>
</dbReference>
<dbReference type="NCBIfam" id="TIGR00287">
    <property type="entry name" value="cas1"/>
    <property type="match status" value="1"/>
</dbReference>
<dbReference type="NCBIfam" id="TIGR03641">
    <property type="entry name" value="cas1_HMARI"/>
    <property type="match status" value="1"/>
</dbReference>
<dbReference type="PANTHER" id="PTHR43219">
    <property type="entry name" value="CRISPR-ASSOCIATED ENDONUCLEASE CAS1"/>
    <property type="match status" value="1"/>
</dbReference>
<dbReference type="PANTHER" id="PTHR43219:SF2">
    <property type="entry name" value="CRISPR-ASSOCIATED ENDONUCLEASE CAS1"/>
    <property type="match status" value="1"/>
</dbReference>
<dbReference type="Pfam" id="PF01867">
    <property type="entry name" value="Cas_Cas1"/>
    <property type="match status" value="1"/>
</dbReference>
<accession>B5YIU9</accession>
<sequence>MRNYYIFSNGRIRRKENTIYIENEQGDRKAIPIEDVDTIHIFGEVDLNTKLLNFICQQGKTVHFYNYYGFYSGSLMPRERNVSGHIVVKQVEHFLDPERRFYLAYSFVEGAIFHMVRNLREYKNTDEFQEKIKKELSNAVETTKISELMGCEGRARDFYYEAFNTFLKSDFSMGKREKRPPRNPINALISFANSMIYTTVLNEIYHTQLNPTVSYLHEPSERRYSLSLDIAEIFKPLLADAIIFKLINNNMIKLDDFEEDVNYCYLNESGRKKFIREFDQKLSTTIKHRKLKRNVSYRTIIRIECYKLIKHFIGDEVYAPFKAWW</sequence>
<gene>
    <name evidence="1" type="primary">cas1-3</name>
    <name type="synonym">cas1_2</name>
    <name type="ordered locus">THEYE_A2036</name>
</gene>
<evidence type="ECO:0000255" key="1">
    <source>
        <dbReference type="HAMAP-Rule" id="MF_01470"/>
    </source>
</evidence>
<proteinExistence type="inferred from homology"/>
<feature type="chain" id="PRO_0000417088" description="CRISPR-associated endonuclease Cas1 3">
    <location>
        <begin position="1"/>
        <end position="325"/>
    </location>
</feature>
<feature type="binding site" evidence="1">
    <location>
        <position position="152"/>
    </location>
    <ligand>
        <name>Mn(2+)</name>
        <dbReference type="ChEBI" id="CHEBI:29035"/>
    </ligand>
</feature>
<feature type="binding site" evidence="1">
    <location>
        <position position="217"/>
    </location>
    <ligand>
        <name>Mn(2+)</name>
        <dbReference type="ChEBI" id="CHEBI:29035"/>
    </ligand>
</feature>
<feature type="binding site" evidence="1">
    <location>
        <position position="232"/>
    </location>
    <ligand>
        <name>Mn(2+)</name>
        <dbReference type="ChEBI" id="CHEBI:29035"/>
    </ligand>
</feature>
<protein>
    <recommendedName>
        <fullName evidence="1">CRISPR-associated endonuclease Cas1 3</fullName>
        <ecNumber evidence="1">3.1.-.-</ecNumber>
    </recommendedName>
</protein>
<name>CAS1C_THEYD</name>
<organism>
    <name type="scientific">Thermodesulfovibrio yellowstonii (strain ATCC 51303 / DSM 11347 / YP87)</name>
    <dbReference type="NCBI Taxonomy" id="289376"/>
    <lineage>
        <taxon>Bacteria</taxon>
        <taxon>Pseudomonadati</taxon>
        <taxon>Nitrospirota</taxon>
        <taxon>Thermodesulfovibrionia</taxon>
        <taxon>Thermodesulfovibrionales</taxon>
        <taxon>Thermodesulfovibrionaceae</taxon>
        <taxon>Thermodesulfovibrio</taxon>
    </lineage>
</organism>
<comment type="function">
    <text evidence="1">CRISPR (clustered regularly interspaced short palindromic repeat), is an adaptive immune system that provides protection against mobile genetic elements (viruses, transposable elements and conjugative plasmids). CRISPR clusters contain spacers, sequences complementary to antecedent mobile elements, and target invading nucleic acids. CRISPR clusters are transcribed and processed into CRISPR RNA (crRNA). Acts as a dsDNA endonuclease. Involved in the integration of spacer DNA into the CRISPR cassette.</text>
</comment>
<comment type="cofactor">
    <cofactor evidence="1">
        <name>Mg(2+)</name>
        <dbReference type="ChEBI" id="CHEBI:18420"/>
    </cofactor>
    <cofactor evidence="1">
        <name>Mn(2+)</name>
        <dbReference type="ChEBI" id="CHEBI:29035"/>
    </cofactor>
</comment>
<comment type="subunit">
    <text evidence="1">Homodimer, forms a heterotetramer with a Cas2 homodimer.</text>
</comment>
<comment type="similarity">
    <text evidence="1">Belongs to the CRISPR-associated endonuclease Cas1 family.</text>
</comment>
<reference key="1">
    <citation type="submission" date="2008-08" db="EMBL/GenBank/DDBJ databases">
        <title>The complete genome sequence of Thermodesulfovibrio yellowstonii strain ATCC 51303 / DSM 11347 / YP87.</title>
        <authorList>
            <person name="Dodson R.J."/>
            <person name="Durkin A.S."/>
            <person name="Wu M."/>
            <person name="Eisen J."/>
            <person name="Sutton G."/>
        </authorList>
    </citation>
    <scope>NUCLEOTIDE SEQUENCE [LARGE SCALE GENOMIC DNA]</scope>
    <source>
        <strain>ATCC 51303 / DSM 11347 / YP87</strain>
    </source>
</reference>
<keyword id="KW-0051">Antiviral defense</keyword>
<keyword id="KW-0238">DNA-binding</keyword>
<keyword id="KW-0255">Endonuclease</keyword>
<keyword id="KW-0378">Hydrolase</keyword>
<keyword id="KW-0460">Magnesium</keyword>
<keyword id="KW-0464">Manganese</keyword>
<keyword id="KW-0479">Metal-binding</keyword>
<keyword id="KW-0540">Nuclease</keyword>
<keyword id="KW-1185">Reference proteome</keyword>